<name>NDK_ANAPZ</name>
<feature type="chain" id="PRO_0000242493" description="Nucleoside diphosphate kinase">
    <location>
        <begin position="1"/>
        <end position="140"/>
    </location>
</feature>
<feature type="active site" description="Pros-phosphohistidine intermediate" evidence="1">
    <location>
        <position position="116"/>
    </location>
</feature>
<feature type="binding site" evidence="1">
    <location>
        <position position="10"/>
    </location>
    <ligand>
        <name>ATP</name>
        <dbReference type="ChEBI" id="CHEBI:30616"/>
    </ligand>
</feature>
<feature type="binding site" evidence="1">
    <location>
        <position position="58"/>
    </location>
    <ligand>
        <name>ATP</name>
        <dbReference type="ChEBI" id="CHEBI:30616"/>
    </ligand>
</feature>
<feature type="binding site" evidence="1">
    <location>
        <position position="86"/>
    </location>
    <ligand>
        <name>ATP</name>
        <dbReference type="ChEBI" id="CHEBI:30616"/>
    </ligand>
</feature>
<feature type="binding site" evidence="1">
    <location>
        <position position="92"/>
    </location>
    <ligand>
        <name>ATP</name>
        <dbReference type="ChEBI" id="CHEBI:30616"/>
    </ligand>
</feature>
<feature type="binding site" evidence="1">
    <location>
        <position position="103"/>
    </location>
    <ligand>
        <name>ATP</name>
        <dbReference type="ChEBI" id="CHEBI:30616"/>
    </ligand>
</feature>
<feature type="binding site" evidence="1">
    <location>
        <position position="113"/>
    </location>
    <ligand>
        <name>ATP</name>
        <dbReference type="ChEBI" id="CHEBI:30616"/>
    </ligand>
</feature>
<dbReference type="EC" id="2.7.4.6" evidence="1"/>
<dbReference type="EMBL" id="CP000235">
    <property type="protein sequence ID" value="ABD44269.1"/>
    <property type="molecule type" value="Genomic_DNA"/>
</dbReference>
<dbReference type="RefSeq" id="WP_011451255.1">
    <property type="nucleotide sequence ID" value="NC_007797.1"/>
</dbReference>
<dbReference type="SMR" id="Q2GIQ3"/>
<dbReference type="STRING" id="212042.APH_1217"/>
<dbReference type="PaxDb" id="212042-APH_1217"/>
<dbReference type="EnsemblBacteria" id="ABD44269">
    <property type="protein sequence ID" value="ABD44269"/>
    <property type="gene ID" value="APH_1217"/>
</dbReference>
<dbReference type="GeneID" id="92747891"/>
<dbReference type="KEGG" id="aph:APH_1217"/>
<dbReference type="eggNOG" id="COG0105">
    <property type="taxonomic scope" value="Bacteria"/>
</dbReference>
<dbReference type="HOGENOM" id="CLU_060216_8_1_5"/>
<dbReference type="Proteomes" id="UP000001943">
    <property type="component" value="Chromosome"/>
</dbReference>
<dbReference type="GO" id="GO:0005737">
    <property type="term" value="C:cytoplasm"/>
    <property type="evidence" value="ECO:0007669"/>
    <property type="project" value="UniProtKB-SubCell"/>
</dbReference>
<dbReference type="GO" id="GO:0005524">
    <property type="term" value="F:ATP binding"/>
    <property type="evidence" value="ECO:0007669"/>
    <property type="project" value="UniProtKB-UniRule"/>
</dbReference>
<dbReference type="GO" id="GO:0046872">
    <property type="term" value="F:metal ion binding"/>
    <property type="evidence" value="ECO:0007669"/>
    <property type="project" value="UniProtKB-KW"/>
</dbReference>
<dbReference type="GO" id="GO:0004550">
    <property type="term" value="F:nucleoside diphosphate kinase activity"/>
    <property type="evidence" value="ECO:0007669"/>
    <property type="project" value="UniProtKB-UniRule"/>
</dbReference>
<dbReference type="GO" id="GO:0006241">
    <property type="term" value="P:CTP biosynthetic process"/>
    <property type="evidence" value="ECO:0007669"/>
    <property type="project" value="UniProtKB-UniRule"/>
</dbReference>
<dbReference type="GO" id="GO:0006183">
    <property type="term" value="P:GTP biosynthetic process"/>
    <property type="evidence" value="ECO:0007669"/>
    <property type="project" value="UniProtKB-UniRule"/>
</dbReference>
<dbReference type="GO" id="GO:0006228">
    <property type="term" value="P:UTP biosynthetic process"/>
    <property type="evidence" value="ECO:0007669"/>
    <property type="project" value="UniProtKB-UniRule"/>
</dbReference>
<dbReference type="CDD" id="cd04413">
    <property type="entry name" value="NDPk_I"/>
    <property type="match status" value="1"/>
</dbReference>
<dbReference type="FunFam" id="3.30.70.141:FF:000003">
    <property type="entry name" value="Nucleoside diphosphate kinase"/>
    <property type="match status" value="1"/>
</dbReference>
<dbReference type="Gene3D" id="3.30.70.141">
    <property type="entry name" value="Nucleoside diphosphate kinase-like domain"/>
    <property type="match status" value="1"/>
</dbReference>
<dbReference type="HAMAP" id="MF_00451">
    <property type="entry name" value="NDP_kinase"/>
    <property type="match status" value="1"/>
</dbReference>
<dbReference type="InterPro" id="IPR034907">
    <property type="entry name" value="NDK-like_dom"/>
</dbReference>
<dbReference type="InterPro" id="IPR036850">
    <property type="entry name" value="NDK-like_dom_sf"/>
</dbReference>
<dbReference type="InterPro" id="IPR001564">
    <property type="entry name" value="Nucleoside_diP_kinase"/>
</dbReference>
<dbReference type="NCBIfam" id="NF001908">
    <property type="entry name" value="PRK00668.1"/>
    <property type="match status" value="1"/>
</dbReference>
<dbReference type="PANTHER" id="PTHR46161">
    <property type="entry name" value="NUCLEOSIDE DIPHOSPHATE KINASE"/>
    <property type="match status" value="1"/>
</dbReference>
<dbReference type="PANTHER" id="PTHR46161:SF3">
    <property type="entry name" value="NUCLEOSIDE DIPHOSPHATE KINASE DDB_G0292928-RELATED"/>
    <property type="match status" value="1"/>
</dbReference>
<dbReference type="Pfam" id="PF00334">
    <property type="entry name" value="NDK"/>
    <property type="match status" value="1"/>
</dbReference>
<dbReference type="PRINTS" id="PR01243">
    <property type="entry name" value="NUCDPKINASE"/>
</dbReference>
<dbReference type="SMART" id="SM00562">
    <property type="entry name" value="NDK"/>
    <property type="match status" value="1"/>
</dbReference>
<dbReference type="SUPFAM" id="SSF54919">
    <property type="entry name" value="Nucleoside diphosphate kinase, NDK"/>
    <property type="match status" value="1"/>
</dbReference>
<dbReference type="PROSITE" id="PS51374">
    <property type="entry name" value="NDPK_LIKE"/>
    <property type="match status" value="1"/>
</dbReference>
<gene>
    <name evidence="1" type="primary">ndk</name>
    <name type="ordered locus">APH_1217</name>
</gene>
<evidence type="ECO:0000255" key="1">
    <source>
        <dbReference type="HAMAP-Rule" id="MF_00451"/>
    </source>
</evidence>
<proteinExistence type="inferred from homology"/>
<reference key="1">
    <citation type="journal article" date="2006" name="PLoS Genet.">
        <title>Comparative genomics of emerging human ehrlichiosis agents.</title>
        <authorList>
            <person name="Dunning Hotopp J.C."/>
            <person name="Lin M."/>
            <person name="Madupu R."/>
            <person name="Crabtree J."/>
            <person name="Angiuoli S.V."/>
            <person name="Eisen J.A."/>
            <person name="Seshadri R."/>
            <person name="Ren Q."/>
            <person name="Wu M."/>
            <person name="Utterback T.R."/>
            <person name="Smith S."/>
            <person name="Lewis M."/>
            <person name="Khouri H."/>
            <person name="Zhang C."/>
            <person name="Niu H."/>
            <person name="Lin Q."/>
            <person name="Ohashi N."/>
            <person name="Zhi N."/>
            <person name="Nelson W.C."/>
            <person name="Brinkac L.M."/>
            <person name="Dodson R.J."/>
            <person name="Rosovitz M.J."/>
            <person name="Sundaram J.P."/>
            <person name="Daugherty S.C."/>
            <person name="Davidsen T."/>
            <person name="Durkin A.S."/>
            <person name="Gwinn M.L."/>
            <person name="Haft D.H."/>
            <person name="Selengut J.D."/>
            <person name="Sullivan S.A."/>
            <person name="Zafar N."/>
            <person name="Zhou L."/>
            <person name="Benahmed F."/>
            <person name="Forberger H."/>
            <person name="Halpin R."/>
            <person name="Mulligan S."/>
            <person name="Robinson J."/>
            <person name="White O."/>
            <person name="Rikihisa Y."/>
            <person name="Tettelin H."/>
        </authorList>
    </citation>
    <scope>NUCLEOTIDE SEQUENCE [LARGE SCALE GENOMIC DNA]</scope>
    <source>
        <strain>HZ</strain>
    </source>
</reference>
<organism>
    <name type="scientific">Anaplasma phagocytophilum (strain HZ)</name>
    <dbReference type="NCBI Taxonomy" id="212042"/>
    <lineage>
        <taxon>Bacteria</taxon>
        <taxon>Pseudomonadati</taxon>
        <taxon>Pseudomonadota</taxon>
        <taxon>Alphaproteobacteria</taxon>
        <taxon>Rickettsiales</taxon>
        <taxon>Anaplasmataceae</taxon>
        <taxon>Anaplasma</taxon>
        <taxon>phagocytophilum group</taxon>
    </lineage>
</organism>
<keyword id="KW-0067">ATP-binding</keyword>
<keyword id="KW-0963">Cytoplasm</keyword>
<keyword id="KW-0418">Kinase</keyword>
<keyword id="KW-0460">Magnesium</keyword>
<keyword id="KW-0479">Metal-binding</keyword>
<keyword id="KW-0546">Nucleotide metabolism</keyword>
<keyword id="KW-0547">Nucleotide-binding</keyword>
<keyword id="KW-0597">Phosphoprotein</keyword>
<keyword id="KW-0808">Transferase</keyword>
<accession>Q2GIQ3</accession>
<protein>
    <recommendedName>
        <fullName evidence="1">Nucleoside diphosphate kinase</fullName>
        <shortName evidence="1">NDK</shortName>
        <shortName evidence="1">NDP kinase</shortName>
        <ecNumber evidence="1">2.7.4.6</ecNumber>
    </recommendedName>
    <alternativeName>
        <fullName evidence="1">Nucleoside-2-P kinase</fullName>
    </alternativeName>
</protein>
<sequence length="140" mass="15620">MQERTLSILKPDVVERGIIGNVISYIEAAGLKVVAQRMCRLTVSQAEEFYDVHRDRPFFPELVKFMTSGPVVVQVLEGESAIAVYRDVMGATNPKEAAKGTIRADFAESIDANCVHGSDNADNAKREIMFFFGECEIFKR</sequence>
<comment type="function">
    <text evidence="1">Major role in the synthesis of nucleoside triphosphates other than ATP. The ATP gamma phosphate is transferred to the NDP beta phosphate via a ping-pong mechanism, using a phosphorylated active-site intermediate.</text>
</comment>
<comment type="catalytic activity">
    <reaction evidence="1">
        <text>a 2'-deoxyribonucleoside 5'-diphosphate + ATP = a 2'-deoxyribonucleoside 5'-triphosphate + ADP</text>
        <dbReference type="Rhea" id="RHEA:44640"/>
        <dbReference type="ChEBI" id="CHEBI:30616"/>
        <dbReference type="ChEBI" id="CHEBI:61560"/>
        <dbReference type="ChEBI" id="CHEBI:73316"/>
        <dbReference type="ChEBI" id="CHEBI:456216"/>
        <dbReference type="EC" id="2.7.4.6"/>
    </reaction>
</comment>
<comment type="catalytic activity">
    <reaction evidence="1">
        <text>a ribonucleoside 5'-diphosphate + ATP = a ribonucleoside 5'-triphosphate + ADP</text>
        <dbReference type="Rhea" id="RHEA:18113"/>
        <dbReference type="ChEBI" id="CHEBI:30616"/>
        <dbReference type="ChEBI" id="CHEBI:57930"/>
        <dbReference type="ChEBI" id="CHEBI:61557"/>
        <dbReference type="ChEBI" id="CHEBI:456216"/>
        <dbReference type="EC" id="2.7.4.6"/>
    </reaction>
</comment>
<comment type="cofactor">
    <cofactor evidence="1">
        <name>Mg(2+)</name>
        <dbReference type="ChEBI" id="CHEBI:18420"/>
    </cofactor>
</comment>
<comment type="subunit">
    <text evidence="1">Homotetramer.</text>
</comment>
<comment type="subcellular location">
    <subcellularLocation>
        <location evidence="1">Cytoplasm</location>
    </subcellularLocation>
</comment>
<comment type="similarity">
    <text evidence="1">Belongs to the NDK family.</text>
</comment>